<sequence length="138" mass="14903">MRIEARIFELLTVFFIIVGVVYGFFTAQSRTGVEWAGTTAIVLTAGLSLIIGTYFRFVARRLDLRPEDYEDAEIVDGAGDLGFFSPGSFWPILLAGAGSVAALGLAFFEPWLIAVGVICVIAAAAGLVFEYHLGPEKH</sequence>
<evidence type="ECO:0000250" key="1"/>
<evidence type="ECO:0000255" key="2"/>
<evidence type="ECO:0000305" key="3"/>
<keyword id="KW-1003">Cell membrane</keyword>
<keyword id="KW-0472">Membrane</keyword>
<keyword id="KW-1185">Reference proteome</keyword>
<keyword id="KW-1278">Translocase</keyword>
<keyword id="KW-0812">Transmembrane</keyword>
<keyword id="KW-1133">Transmembrane helix</keyword>
<dbReference type="EC" id="7.1.1.9"/>
<dbReference type="EMBL" id="AP006618">
    <property type="protein sequence ID" value="BAD56555.1"/>
    <property type="molecule type" value="Genomic_DNA"/>
</dbReference>
<dbReference type="RefSeq" id="WP_011208240.1">
    <property type="nucleotide sequence ID" value="NC_006361.1"/>
</dbReference>
<dbReference type="SMR" id="Q5YZ36"/>
<dbReference type="STRING" id="247156.NFA_17090"/>
<dbReference type="GeneID" id="61132492"/>
<dbReference type="KEGG" id="nfa:NFA_17090"/>
<dbReference type="eggNOG" id="ENOG5032SZC">
    <property type="taxonomic scope" value="Bacteria"/>
</dbReference>
<dbReference type="HOGENOM" id="CLU_145919_0_0_11"/>
<dbReference type="OrthoDB" id="5244617at2"/>
<dbReference type="Proteomes" id="UP000006820">
    <property type="component" value="Chromosome"/>
</dbReference>
<dbReference type="GO" id="GO:0005886">
    <property type="term" value="C:plasma membrane"/>
    <property type="evidence" value="ECO:0007669"/>
    <property type="project" value="UniProtKB-SubCell"/>
</dbReference>
<dbReference type="GO" id="GO:0004129">
    <property type="term" value="F:cytochrome-c oxidase activity"/>
    <property type="evidence" value="ECO:0007669"/>
    <property type="project" value="UniProtKB-EC"/>
</dbReference>
<dbReference type="GO" id="GO:0022900">
    <property type="term" value="P:electron transport chain"/>
    <property type="evidence" value="ECO:0007669"/>
    <property type="project" value="InterPro"/>
</dbReference>
<dbReference type="InterPro" id="IPR021050">
    <property type="entry name" value="Cyt_c_oxidase_su4_actinobac"/>
</dbReference>
<dbReference type="Pfam" id="PF12270">
    <property type="entry name" value="Cyt_c_ox_IV"/>
    <property type="match status" value="1"/>
</dbReference>
<dbReference type="PIRSF" id="PIRSF017385">
    <property type="entry name" value="CtaF"/>
    <property type="match status" value="1"/>
</dbReference>
<proteinExistence type="inferred from homology"/>
<name>COX4_NOCFA</name>
<feature type="chain" id="PRO_0000220020" description="Probable cytochrome c oxidase polypeptide 4">
    <location>
        <begin position="1"/>
        <end position="138"/>
    </location>
</feature>
<feature type="transmembrane region" description="Helical" evidence="2">
    <location>
        <begin position="7"/>
        <end position="27"/>
    </location>
</feature>
<feature type="transmembrane region" description="Helical" evidence="2">
    <location>
        <begin position="35"/>
        <end position="55"/>
    </location>
</feature>
<feature type="transmembrane region" description="Helical" evidence="2">
    <location>
        <begin position="81"/>
        <end position="101"/>
    </location>
</feature>
<feature type="transmembrane region" description="Helical" evidence="2">
    <location>
        <begin position="102"/>
        <end position="122"/>
    </location>
</feature>
<reference key="1">
    <citation type="journal article" date="2004" name="Proc. Natl. Acad. Sci. U.S.A.">
        <title>The complete genomic sequence of Nocardia farcinica IFM 10152.</title>
        <authorList>
            <person name="Ishikawa J."/>
            <person name="Yamashita A."/>
            <person name="Mikami Y."/>
            <person name="Hoshino Y."/>
            <person name="Kurita H."/>
            <person name="Hotta K."/>
            <person name="Shiba T."/>
            <person name="Hattori M."/>
        </authorList>
    </citation>
    <scope>NUCLEOTIDE SEQUENCE [LARGE SCALE GENOMIC DNA]</scope>
    <source>
        <strain>IFM 10152</strain>
    </source>
</reference>
<organism>
    <name type="scientific">Nocardia farcinica (strain IFM 10152)</name>
    <dbReference type="NCBI Taxonomy" id="247156"/>
    <lineage>
        <taxon>Bacteria</taxon>
        <taxon>Bacillati</taxon>
        <taxon>Actinomycetota</taxon>
        <taxon>Actinomycetes</taxon>
        <taxon>Mycobacteriales</taxon>
        <taxon>Nocardiaceae</taxon>
        <taxon>Nocardia</taxon>
    </lineage>
</organism>
<gene>
    <name type="primary">ctaF</name>
    <name type="ordered locus">NFA_17090</name>
</gene>
<protein>
    <recommendedName>
        <fullName>Probable cytochrome c oxidase polypeptide 4</fullName>
        <ecNumber>7.1.1.9</ecNumber>
    </recommendedName>
    <alternativeName>
        <fullName>Cytochrome aa3 subunit 4</fullName>
    </alternativeName>
    <alternativeName>
        <fullName>Cytochrome c oxidase polypeptide IV</fullName>
    </alternativeName>
</protein>
<accession>Q5YZ36</accession>
<comment type="function">
    <text evidence="1">Part of cytochrome c oxidase, its function is unknown.</text>
</comment>
<comment type="catalytic activity">
    <reaction>
        <text>4 Fe(II)-[cytochrome c] + O2 + 8 H(+)(in) = 4 Fe(III)-[cytochrome c] + 2 H2O + 4 H(+)(out)</text>
        <dbReference type="Rhea" id="RHEA:11436"/>
        <dbReference type="Rhea" id="RHEA-COMP:10350"/>
        <dbReference type="Rhea" id="RHEA-COMP:14399"/>
        <dbReference type="ChEBI" id="CHEBI:15377"/>
        <dbReference type="ChEBI" id="CHEBI:15378"/>
        <dbReference type="ChEBI" id="CHEBI:15379"/>
        <dbReference type="ChEBI" id="CHEBI:29033"/>
        <dbReference type="ChEBI" id="CHEBI:29034"/>
        <dbReference type="EC" id="7.1.1.9"/>
    </reaction>
</comment>
<comment type="subunit">
    <text evidence="1">Associates with subunits I, II and III to form cytochrome c oxidase.</text>
</comment>
<comment type="subcellular location">
    <subcellularLocation>
        <location evidence="1">Cell membrane</location>
        <topology evidence="1">Multi-pass membrane protein</topology>
    </subcellularLocation>
</comment>
<comment type="similarity">
    <text evidence="3">Belongs to the cytochrome c oxidase bacterial subunit CtaF family.</text>
</comment>